<name>FUT3_BOVIN</name>
<accession>Q11126</accession>
<accession>Q4LDG4</accession>
<evidence type="ECO:0000250" key="1">
    <source>
        <dbReference type="UniProtKB" id="P21217"/>
    </source>
</evidence>
<evidence type="ECO:0000255" key="2"/>
<evidence type="ECO:0000303" key="3">
    <source>
    </source>
</evidence>
<evidence type="ECO:0000305" key="4"/>
<proteinExistence type="evidence at transcript level"/>
<protein>
    <recommendedName>
        <fullName evidence="1">3-galactosyl-N-acetylglucosaminide 4-alpha-L-fucosyltransferase FUT3</fullName>
        <ecNumber evidence="1">2.4.1.65</ecNumber>
    </recommendedName>
    <alternativeName>
        <fullName>4-galactosyl-N-acetylglucosaminide 3-alpha-L-fucosyltransferase</fullName>
        <ecNumber evidence="1">2.4.1.152</ecNumber>
    </alternativeName>
    <alternativeName>
        <fullName evidence="1">Alpha-3-fucosyltransferase FUT3</fullName>
        <ecNumber evidence="1">2.4.1.-</ecNumber>
    </alternativeName>
    <alternativeName>
        <fullName>Blood group Lewis alpha-4-fucosyltransferase</fullName>
        <shortName>Lewis FT</shortName>
    </alternativeName>
    <alternativeName>
        <fullName evidence="3">FUTB</fullName>
    </alternativeName>
    <alternativeName>
        <fullName>Fucosyltransferase 3</fullName>
    </alternativeName>
    <alternativeName>
        <fullName>Fucosyltransferase III</fullName>
        <shortName>FucT-III</shortName>
    </alternativeName>
</protein>
<feature type="chain" id="PRO_0000221095" description="3-galactosyl-N-acetylglucosaminide 4-alpha-L-fucosyltransferase FUT3">
    <location>
        <begin position="1"/>
        <end position="365"/>
    </location>
</feature>
<feature type="topological domain" description="Cytoplasmic" evidence="2">
    <location>
        <begin position="1"/>
        <end position="15"/>
    </location>
</feature>
<feature type="transmembrane region" description="Helical; Signal-anchor for type II membrane protein" evidence="1 2">
    <location>
        <begin position="16"/>
        <end position="34"/>
    </location>
</feature>
<feature type="topological domain" description="Lumenal" evidence="2">
    <location>
        <begin position="35"/>
        <end position="365"/>
    </location>
</feature>
<feature type="glycosylation site" description="N-linked (GlcNAc...) asparagine" evidence="4">
    <location>
        <position position="100"/>
    </location>
</feature>
<feature type="glycosylation site" description="N-linked (GlcNAc...) asparagine" evidence="4">
    <location>
        <position position="158"/>
    </location>
</feature>
<feature type="glycosylation site" description="N-linked (GlcNAc...) asparagine" evidence="4">
    <location>
        <position position="189"/>
    </location>
</feature>
<keyword id="KW-0325">Glycoprotein</keyword>
<keyword id="KW-0328">Glycosyltransferase</keyword>
<keyword id="KW-0333">Golgi apparatus</keyword>
<keyword id="KW-0443">Lipid metabolism</keyword>
<keyword id="KW-0472">Membrane</keyword>
<keyword id="KW-1185">Reference proteome</keyword>
<keyword id="KW-0735">Signal-anchor</keyword>
<keyword id="KW-0808">Transferase</keyword>
<keyword id="KW-0812">Transmembrane</keyword>
<keyword id="KW-1133">Transmembrane helix</keyword>
<organism>
    <name type="scientific">Bos taurus</name>
    <name type="common">Bovine</name>
    <dbReference type="NCBI Taxonomy" id="9913"/>
    <lineage>
        <taxon>Eukaryota</taxon>
        <taxon>Metazoa</taxon>
        <taxon>Chordata</taxon>
        <taxon>Craniata</taxon>
        <taxon>Vertebrata</taxon>
        <taxon>Euteleostomi</taxon>
        <taxon>Mammalia</taxon>
        <taxon>Eutheria</taxon>
        <taxon>Laurasiatheria</taxon>
        <taxon>Artiodactyla</taxon>
        <taxon>Ruminantia</taxon>
        <taxon>Pecora</taxon>
        <taxon>Bovidae</taxon>
        <taxon>Bovinae</taxon>
        <taxon>Bos</taxon>
    </lineage>
</organism>
<dbReference type="EC" id="2.4.1.65" evidence="1"/>
<dbReference type="EC" id="2.4.1.152" evidence="1"/>
<dbReference type="EC" id="2.4.1.-" evidence="1"/>
<dbReference type="EMBL" id="X87810">
    <property type="protein sequence ID" value="CAA61079.1"/>
    <property type="molecule type" value="Genomic_DNA"/>
</dbReference>
<dbReference type="EMBL" id="AJ132772">
    <property type="protein sequence ID" value="CAA10771.1"/>
    <property type="molecule type" value="Genomic_DNA"/>
</dbReference>
<dbReference type="SMR" id="Q11126"/>
<dbReference type="FunCoup" id="Q11126">
    <property type="interactions" value="37"/>
</dbReference>
<dbReference type="STRING" id="9913.ENSBTAP00000000529"/>
<dbReference type="CAZy" id="GT10">
    <property type="family name" value="Glycosyltransferase Family 10"/>
</dbReference>
<dbReference type="GlyCosmos" id="Q11126">
    <property type="glycosylation" value="3 sites, No reported glycans"/>
</dbReference>
<dbReference type="GlyGen" id="Q11126">
    <property type="glycosylation" value="3 sites"/>
</dbReference>
<dbReference type="PaxDb" id="9913-ENSBTAP00000000529"/>
<dbReference type="eggNOG" id="KOG2619">
    <property type="taxonomic scope" value="Eukaryota"/>
</dbReference>
<dbReference type="InParanoid" id="Q11126"/>
<dbReference type="BRENDA" id="2.4.1.65">
    <property type="organism ID" value="908"/>
</dbReference>
<dbReference type="UniPathway" id="UPA00378"/>
<dbReference type="Proteomes" id="UP000009136">
    <property type="component" value="Unplaced"/>
</dbReference>
<dbReference type="GO" id="GO:0032580">
    <property type="term" value="C:Golgi cisterna membrane"/>
    <property type="evidence" value="ECO:0007669"/>
    <property type="project" value="UniProtKB-SubCell"/>
</dbReference>
<dbReference type="GO" id="GO:0017060">
    <property type="term" value="F:3-galactosyl-N-acetylglucosaminide 4-alpha-L-fucosyltransferase activity"/>
    <property type="evidence" value="ECO:0000250"/>
    <property type="project" value="UniProtKB"/>
</dbReference>
<dbReference type="GO" id="GO:0017083">
    <property type="term" value="F:4-galactosyl-N-acetylglucosaminide 3-alpha-L-fucosyltransferase activity"/>
    <property type="evidence" value="ECO:0000250"/>
    <property type="project" value="UniProtKB"/>
</dbReference>
<dbReference type="GO" id="GO:0046920">
    <property type="term" value="F:alpha-(1-&gt;3)-fucosyltransferase activity"/>
    <property type="evidence" value="ECO:0000318"/>
    <property type="project" value="GO_Central"/>
</dbReference>
<dbReference type="GO" id="GO:0036065">
    <property type="term" value="P:fucosylation"/>
    <property type="evidence" value="ECO:0000250"/>
    <property type="project" value="UniProtKB"/>
</dbReference>
<dbReference type="GO" id="GO:0006629">
    <property type="term" value="P:lipid metabolic process"/>
    <property type="evidence" value="ECO:0007669"/>
    <property type="project" value="UniProtKB-KW"/>
</dbReference>
<dbReference type="GO" id="GO:0009311">
    <property type="term" value="P:oligosaccharide metabolic process"/>
    <property type="evidence" value="ECO:0000250"/>
    <property type="project" value="UniProtKB"/>
</dbReference>
<dbReference type="GO" id="GO:0022409">
    <property type="term" value="P:positive regulation of cell-cell adhesion"/>
    <property type="evidence" value="ECO:0000250"/>
    <property type="project" value="UniProtKB"/>
</dbReference>
<dbReference type="GO" id="GO:0006487">
    <property type="term" value="P:protein N-linked glycosylation"/>
    <property type="evidence" value="ECO:0000250"/>
    <property type="project" value="UniProtKB"/>
</dbReference>
<dbReference type="GO" id="GO:0006493">
    <property type="term" value="P:protein O-linked glycosylation"/>
    <property type="evidence" value="ECO:0000250"/>
    <property type="project" value="UniProtKB"/>
</dbReference>
<dbReference type="GO" id="GO:0030334">
    <property type="term" value="P:regulation of cell migration"/>
    <property type="evidence" value="ECO:0000250"/>
    <property type="project" value="UniProtKB"/>
</dbReference>
<dbReference type="GO" id="GO:0042127">
    <property type="term" value="P:regulation of cell population proliferation"/>
    <property type="evidence" value="ECO:0000250"/>
    <property type="project" value="UniProtKB"/>
</dbReference>
<dbReference type="FunFam" id="3.40.50.11660:FF:000001">
    <property type="entry name" value="alpha-(1,3)-fucosyltransferase 9"/>
    <property type="match status" value="1"/>
</dbReference>
<dbReference type="Gene3D" id="3.40.50.11660">
    <property type="entry name" value="Glycosyl transferase family 10, C-terminal domain"/>
    <property type="match status" value="1"/>
</dbReference>
<dbReference type="InterPro" id="IPR055270">
    <property type="entry name" value="Glyco_tran_10_C"/>
</dbReference>
<dbReference type="InterPro" id="IPR031481">
    <property type="entry name" value="Glyco_tran_10_N"/>
</dbReference>
<dbReference type="InterPro" id="IPR001503">
    <property type="entry name" value="Glyco_trans_10"/>
</dbReference>
<dbReference type="InterPro" id="IPR038577">
    <property type="entry name" value="GT10-like_C_sf"/>
</dbReference>
<dbReference type="PANTHER" id="PTHR11929:SF11">
    <property type="entry name" value="4-GALACTOSYL-N-ACETYLGLUCOSAMINIDE 3-ALPHA-L-FUCOSYLTRANSFERASE FUT5"/>
    <property type="match status" value="1"/>
</dbReference>
<dbReference type="PANTHER" id="PTHR11929">
    <property type="entry name" value="ALPHA- 1,3 -FUCOSYLTRANSFERASE"/>
    <property type="match status" value="1"/>
</dbReference>
<dbReference type="Pfam" id="PF17039">
    <property type="entry name" value="Glyco_tran_10_N"/>
    <property type="match status" value="1"/>
</dbReference>
<dbReference type="Pfam" id="PF00852">
    <property type="entry name" value="Glyco_transf_10"/>
    <property type="match status" value="1"/>
</dbReference>
<dbReference type="SUPFAM" id="SSF53756">
    <property type="entry name" value="UDP-Glycosyltransferase/glycogen phosphorylase"/>
    <property type="match status" value="1"/>
</dbReference>
<sequence length="365" mass="42654">MYPPGCAKVKCSWHHCLPGLLLQLLLALCFFSYLRMSQEKPKPKPMWVSELGAPSQATEGSSAHLPLRVLLWTWPFNQPVALSRCSELWPGTADCQLTVNRSEYPQADAVLVHHREVSHRPQMQLPPSPRPPGQRWVWFSMESPSNCLKLKDLDGYFNLTMSYRRDSDIFMPYGWLEPWPSQPVETLLNISAKTKLVAWVVSNWNTDSIRVQYYKLLKPHLQVDVYGRFHTPLPHALMAKQLSQYKFYLAFENSLHPDYITEKLWKNALQAWAVPVVLGPSRVNYEQFLPPKAFIHVEDFQSPKDLAQYLLALDKDYASYLNYFRWRETLRPRSFSWALMFCKACWKLQQEPRYQTVPSIASWFQ</sequence>
<gene>
    <name evidence="1" type="primary">FUT3</name>
</gene>
<comment type="function">
    <text evidence="1">Catalyzes the transfer of L-fucose, from a guanosine diphosphate-beta-L-fucose, to both the subterminal N-acetyl glucosamine (GlcNAc) of type 1 chain (beta-D-Gal-(1-&gt;3)-beta-D-GlcNAc) glycolipids and oligosaccharides via an alpha(1,4) linkage, and the subterminal glucose (Glc) or GlcNAc of type 2 chain (beta-D-Gal-(1-&gt;4)-beta-D-GlcNAc) oligosaccharides via an alpha(1,3) linkage, independently of the presence of terminal alpha-L-fucosyl-(1,2) moieties on the terminal galactose of these acceptors and participates in the blood groups Lewis determination and expression of Lewis a (Le(a)), lewis b (Le(b)), Lewis x/SSEA-1 (Le(x)) and lewis y (Le(y)) antigens. Also catalyzes the transfer of L-fucose to subterminal GlcNAc of sialyl- and disialyl-lactotetraosylceramide to produce sialyl Lewis a (sLe(a)) and disialyl Lewis a via an alpha(1,4) linkage and therefore may regulate cell surface sialyl Lewis a expression and consequently regulates adhesive properties to E-selectin, cell proliferation and migration. Catalyzes the transfer of an L-fucose to 3'-sialyl-N-acetyllactosamine by an alpha(1,3) linkage, which allows the formation of sialyl-Lewis x structure and therefore may regulate the sialyl-Lewis x surface antigen expression and consequently adhesive properties to E-selectin. Prefers type 1 chain over type 2 acceptors. Type 1 tetrasaccharide is a better acceptor than type 1 disaccharide suggesting that a beta anomeric configuration of GlcNAc in the substrate is preferred. Lewis-positive (Le(+)) individuals have an active enzyme while Lewis-negative (Le(-)) individuals have an inactive enzyme.</text>
</comment>
<comment type="catalytic activity">
    <reaction evidence="1">
        <text>a beta-D-galactosyl-(1-&gt;3)-N-acetyl-beta-D-glucosaminyl derivative + GDP-beta-L-fucose = a beta-D-galactosyl-(1-&gt;3)-[alpha-L-fucosyl-(1-&gt;4)]-N-acetyl-beta-D-glucosaminyl derivative + GDP + H(+)</text>
        <dbReference type="Rhea" id="RHEA:23628"/>
        <dbReference type="ChEBI" id="CHEBI:15378"/>
        <dbReference type="ChEBI" id="CHEBI:57273"/>
        <dbReference type="ChEBI" id="CHEBI:58189"/>
        <dbReference type="ChEBI" id="CHEBI:133506"/>
        <dbReference type="ChEBI" id="CHEBI:140304"/>
        <dbReference type="EC" id="2.4.1.65"/>
    </reaction>
    <physiologicalReaction direction="left-to-right" evidence="1">
        <dbReference type="Rhea" id="RHEA:23629"/>
    </physiologicalReaction>
</comment>
<comment type="catalytic activity">
    <reaction evidence="1">
        <text>an N-acetyl-alpha-neuraminyl-(2-&gt;3)-beta-D-galactosyl-(1-&gt;4)-N-acetyl-beta-D-glucosaminyl derivative + GDP-beta-L-fucose = an alpha-Neu5Ac-(2-&gt;3)-beta-D-Gal-(1-&gt;4)-[alpha-L-Fuc-(1-&gt;3)]-beta-D-GlcNAc derivative + GDP + H(+)</text>
        <dbReference type="Rhea" id="RHEA:56076"/>
        <dbReference type="ChEBI" id="CHEBI:15378"/>
        <dbReference type="ChEBI" id="CHEBI:57273"/>
        <dbReference type="ChEBI" id="CHEBI:58189"/>
        <dbReference type="ChEBI" id="CHEBI:136545"/>
        <dbReference type="ChEBI" id="CHEBI:139509"/>
    </reaction>
    <physiologicalReaction direction="left-to-right" evidence="1">
        <dbReference type="Rhea" id="RHEA:56077"/>
    </physiologicalReaction>
</comment>
<comment type="catalytic activity">
    <reaction evidence="1">
        <text>a beta-D-galactosyl-(1-&gt;4)-N-acetyl-beta-D-glucosaminyl derivative + GDP-beta-L-fucose = a beta-D-galactosyl-(1-&gt;4)-[alpha-L-fucosyl-(1-&gt;3)]-N-acetyl-beta-D-glucosaminyl derivative + GDP + H(+)</text>
        <dbReference type="Rhea" id="RHEA:14257"/>
        <dbReference type="ChEBI" id="CHEBI:15378"/>
        <dbReference type="ChEBI" id="CHEBI:57273"/>
        <dbReference type="ChEBI" id="CHEBI:58189"/>
        <dbReference type="ChEBI" id="CHEBI:133507"/>
        <dbReference type="ChEBI" id="CHEBI:137941"/>
        <dbReference type="EC" id="2.4.1.152"/>
    </reaction>
    <physiologicalReaction direction="left-to-right" evidence="1">
        <dbReference type="Rhea" id="RHEA:14258"/>
    </physiologicalReaction>
</comment>
<comment type="catalytic activity">
    <reaction evidence="1">
        <text>an alpha-Neu5Ac-(2-&gt;3)-beta-D-Gal-(1-&gt;4)-beta-D-GlcNAc-(1-&gt;3)-beta-D-Gal-(1-&gt;4)-[alpha-L-Fuc-(1-&gt;3)]-beta-D-GlcNAc derivative + GDP-beta-L-fucose = an alpha-Neu5Ac-(2-&gt;3)-beta-D-Gal-(1-&gt;4)-[alpha-L-Fuc-(1-&gt;3)]-beta-D-GlcNAc-(1-&gt;3)-beta-D-Gal-(1-&gt;4)-[alpha-L-Fuc-(1-&gt;3)]-beta-D-GlcNAc derivative + GDP + H(+)</text>
        <dbReference type="Rhea" id="RHEA:52864"/>
        <dbReference type="ChEBI" id="CHEBI:15378"/>
        <dbReference type="ChEBI" id="CHEBI:57273"/>
        <dbReference type="ChEBI" id="CHEBI:58189"/>
        <dbReference type="ChEBI" id="CHEBI:145342"/>
        <dbReference type="ChEBI" id="CHEBI:145343"/>
    </reaction>
    <physiologicalReaction direction="left-to-right" evidence="1">
        <dbReference type="Rhea" id="RHEA:52865"/>
    </physiologicalReaction>
</comment>
<comment type="catalytic activity">
    <reaction evidence="1">
        <text>Lc4Cer + GDP-beta-L-fucose = a lactoside III(4)-a-Fuc-Lc4Cer + GDP + H(+)</text>
        <dbReference type="Rhea" id="RHEA:48824"/>
        <dbReference type="ChEBI" id="CHEBI:15378"/>
        <dbReference type="ChEBI" id="CHEBI:57273"/>
        <dbReference type="ChEBI" id="CHEBI:58189"/>
        <dbReference type="ChEBI" id="CHEBI:90800"/>
        <dbReference type="ChEBI" id="CHEBI:90811"/>
    </reaction>
    <physiologicalReaction direction="left-to-right" evidence="1">
        <dbReference type="Rhea" id="RHEA:48825"/>
    </physiologicalReaction>
</comment>
<comment type="catalytic activity">
    <reaction evidence="1">
        <text>a beta-D-Gal-(1-&gt;3)-beta-D-GlcNAc-(1-&gt;3)-beta-D-Gal-(1-&gt;4)-beta-D-Glc-(1&lt;-&gt;1')-Cer(d18:1(4E)) + GDP-beta-L-fucose = a III(4)-a-Fuc-Lc4Cer(d18:1(4E)) + GDP + H(+)</text>
        <dbReference type="Rhea" id="RHEA:48328"/>
        <dbReference type="ChEBI" id="CHEBI:15378"/>
        <dbReference type="ChEBI" id="CHEBI:17292"/>
        <dbReference type="ChEBI" id="CHEBI:57273"/>
        <dbReference type="ChEBI" id="CHEBI:58189"/>
        <dbReference type="ChEBI" id="CHEBI:90292"/>
    </reaction>
    <physiologicalReaction direction="left-to-right" evidence="1">
        <dbReference type="Rhea" id="RHEA:48329"/>
    </physiologicalReaction>
</comment>
<comment type="catalytic activity">
    <reaction evidence="1">
        <text>N-acetyl-alpha-neuraminosyl-(2-&gt;3)-beta-D-galactosyl-(1-&gt;3)-[N-acetyl-alpha-neuraminosyl-(2-&gt;6)]-N-acetyl-beta-D-glucosaminyl-(1-&gt;3)-beta-D-galactosyl-(1-&gt;4)-beta-D-glucosyl-(1&lt;-&gt;1')-N-acyl-sphing-4-enine + GDP-beta-L-fucose = N-acetyl-alpha-neuraminosyl-(2-&gt;3)-beta-D-galactosyl-(1-&gt;3)-alpha-L-fucosyl-(1-&gt;4)-[N-acetyl-alpha-neuraminosyl-(2-&gt;6)-N-acetyl-beta-D-glucosaminyl-(1-&gt;3)]-beta-D-galactosyl-(1-&gt;4)-beta-D-glucosyl-(1&lt;-&gt;1')-N-acyl-sphing-4-enine + GDP + H(+)</text>
        <dbReference type="Rhea" id="RHEA:47892"/>
        <dbReference type="ChEBI" id="CHEBI:15378"/>
        <dbReference type="ChEBI" id="CHEBI:57273"/>
        <dbReference type="ChEBI" id="CHEBI:58189"/>
        <dbReference type="ChEBI" id="CHEBI:88079"/>
        <dbReference type="ChEBI" id="CHEBI:88089"/>
    </reaction>
    <physiologicalReaction direction="left-to-right" evidence="1">
        <dbReference type="Rhea" id="RHEA:47893"/>
    </physiologicalReaction>
</comment>
<comment type="catalytic activity">
    <reaction evidence="1">
        <text>N-acetyl-alpha-neuraminosyl-(2-&gt;3)-beta-D-galactosyl-(1-&gt;3)-N-acetyl-beta-D-glucosaminyl-(1-&gt;3)-beta-D-galactosyl-(1-&gt;4)-beta-D-glucosyl-(1&lt;-&gt;1')-N-acyl-sphing-4-enine + GDP-beta-L-fucose = N-acetyl-alpha-neuraminosyl-(2-&gt;3)-beta-D-galactosyl-(1-&gt;3)-alpha-L-fucosyl-(1-&gt;4)-[N-acetyl-beta-D-glucosaminyl-(1-&gt;3)]-beta-D-galactosyl-(1-&gt;4)-beta-D-glucosyl-(1&lt;-&gt;1')-N-acyl-sphing-4-enine + GDP + H(+)</text>
        <dbReference type="Rhea" id="RHEA:47888"/>
        <dbReference type="ChEBI" id="CHEBI:15378"/>
        <dbReference type="ChEBI" id="CHEBI:57273"/>
        <dbReference type="ChEBI" id="CHEBI:58189"/>
        <dbReference type="ChEBI" id="CHEBI:88073"/>
        <dbReference type="ChEBI" id="CHEBI:88088"/>
    </reaction>
    <physiologicalReaction direction="left-to-right" evidence="1">
        <dbReference type="Rhea" id="RHEA:47889"/>
    </physiologicalReaction>
</comment>
<comment type="catalytic activity">
    <reaction evidence="1">
        <text>beta-D-galactosyl-(1-&gt;3)-N-acetyl-D-glucosamine + GDP-beta-L-fucose = beta-D-galactosyl-(1-&gt;3)-[alpha-L-fucosyl-(1-&gt;4)]-N-acetyl-D-glucosamine + GDP + H(+)</text>
        <dbReference type="Rhea" id="RHEA:62844"/>
        <dbReference type="ChEBI" id="CHEBI:15378"/>
        <dbReference type="ChEBI" id="CHEBI:27707"/>
        <dbReference type="ChEBI" id="CHEBI:57273"/>
        <dbReference type="ChEBI" id="CHEBI:58189"/>
        <dbReference type="ChEBI" id="CHEBI:62265"/>
    </reaction>
    <physiologicalReaction direction="left-to-right" evidence="1">
        <dbReference type="Rhea" id="RHEA:62845"/>
    </physiologicalReaction>
</comment>
<comment type="catalytic activity">
    <reaction evidence="1">
        <text>alpha-L-Fuc-(1-&gt;2)-beta-D-Gal-(1-&gt;3)-D-GlcNAc + GDP-beta-L-fucose = alpha-L-Fuc-(1-&gt;2)-beta-D-Gal-(1-&gt;3)-[alpha-L-Fuc-(1-&gt;4)]-D-GlcNAc + GDP + H(+)</text>
        <dbReference type="Rhea" id="RHEA:62896"/>
        <dbReference type="ChEBI" id="CHEBI:15378"/>
        <dbReference type="ChEBI" id="CHEBI:57273"/>
        <dbReference type="ChEBI" id="CHEBI:58189"/>
        <dbReference type="ChEBI" id="CHEBI:59440"/>
        <dbReference type="ChEBI" id="CHEBI:62259"/>
    </reaction>
    <physiologicalReaction direction="left-to-right" evidence="1">
        <dbReference type="Rhea" id="RHEA:62897"/>
    </physiologicalReaction>
</comment>
<comment type="catalytic activity">
    <reaction evidence="1">
        <text>alpha-L-Fuc-(1-&gt;2)-beta-D-Gal-(1-&gt;4)-D-GlcNAc + GDP-beta-L-fucose = alpha-L-Fuc-(1-&gt;2)-beta-D-Gal-(1-&gt;4)-[alpha-L-Fuc-(1-&gt;3)]-D-GlcNAc + GDP + H(+)</text>
        <dbReference type="Rhea" id="RHEA:62900"/>
        <dbReference type="ChEBI" id="CHEBI:15378"/>
        <dbReference type="ChEBI" id="CHEBI:57273"/>
        <dbReference type="ChEBI" id="CHEBI:58189"/>
        <dbReference type="ChEBI" id="CHEBI:62263"/>
        <dbReference type="ChEBI" id="CHEBI:62507"/>
    </reaction>
    <physiologicalReaction direction="left-to-right" evidence="1">
        <dbReference type="Rhea" id="RHEA:62901"/>
    </physiologicalReaction>
</comment>
<comment type="catalytic activity">
    <reaction evidence="1">
        <text>beta-D-galactosyl-(1-&gt;4)-N-acetyl-D-glucosamine + GDP-beta-L-fucose = beta-D-galactosyl-(1-&gt;4)-[alpha-L-fucosyl-(1-&gt;3)]-N-acetyl-D-glucosamine + GDP + H(+)</text>
        <dbReference type="Rhea" id="RHEA:62824"/>
        <dbReference type="ChEBI" id="CHEBI:15378"/>
        <dbReference type="ChEBI" id="CHEBI:57273"/>
        <dbReference type="ChEBI" id="CHEBI:58189"/>
        <dbReference type="ChEBI" id="CHEBI:60152"/>
        <dbReference type="ChEBI" id="CHEBI:62287"/>
    </reaction>
    <physiologicalReaction direction="left-to-right" evidence="1">
        <dbReference type="Rhea" id="RHEA:62825"/>
    </physiologicalReaction>
</comment>
<comment type="catalytic activity">
    <reaction evidence="1">
        <text>lactose + GDP-beta-L-fucose = beta-D-galactosyl-(1-&gt;4)-[alpha-L-fucosyl-(1-&gt;3)]-D-glucose + GDP + H(+)</text>
        <dbReference type="Rhea" id="RHEA:62888"/>
        <dbReference type="ChEBI" id="CHEBI:15378"/>
        <dbReference type="ChEBI" id="CHEBI:17716"/>
        <dbReference type="ChEBI" id="CHEBI:57273"/>
        <dbReference type="ChEBI" id="CHEBI:58189"/>
        <dbReference type="ChEBI" id="CHEBI:90065"/>
    </reaction>
    <physiologicalReaction direction="left-to-right" evidence="1">
        <dbReference type="Rhea" id="RHEA:62889"/>
    </physiologicalReaction>
</comment>
<comment type="catalytic activity">
    <reaction evidence="1">
        <text>an alpha-Neu5Ac-(2-&gt;3)-beta-D-Gal-(1-&gt;3)-D-GlcNAc derivative + GDP-beta-L-fucose = an alpha-Neu5Ac-(2-&gt;3)-beta-D-Gal-(1-&gt;3)-[alpha-L-Fuc-(1-&gt;4)]-beta-D-GlcNAc derivative + GDP + H(+)</text>
        <dbReference type="Rhea" id="RHEA:62904"/>
        <dbReference type="ChEBI" id="CHEBI:15378"/>
        <dbReference type="ChEBI" id="CHEBI:57273"/>
        <dbReference type="ChEBI" id="CHEBI:58189"/>
        <dbReference type="ChEBI" id="CHEBI:146021"/>
        <dbReference type="ChEBI" id="CHEBI:146022"/>
    </reaction>
    <physiologicalReaction direction="left-to-right" evidence="1">
        <dbReference type="Rhea" id="RHEA:62905"/>
    </physiologicalReaction>
</comment>
<comment type="pathway">
    <text evidence="1">Protein modification; protein glycosylation.</text>
</comment>
<comment type="subcellular location">
    <subcellularLocation>
        <location evidence="1">Golgi apparatus</location>
        <location evidence="1">Golgi stack membrane</location>
        <topology evidence="1">Single-pass type II membrane protein</topology>
    </subcellularLocation>
    <text evidence="1">Membrane-bound form in trans cisternae of Golgi.</text>
</comment>
<comment type="tissue specificity">
    <text>Liver, kidney, lung and brain.</text>
</comment>
<comment type="PTM">
    <text evidence="1">Glycosylated.</text>
</comment>
<comment type="similarity">
    <text evidence="4">Belongs to the glycosyltransferase 10 family.</text>
</comment>
<reference key="1">
    <citation type="journal article" date="1997" name="J. Biol. Chem.">
        <title>Molecular cloning and expression of a bovine alpha(1,3)-fucosyltransferase gene homologous to a putative ancestor gene of the human FUT3-FUT5-FUT6 cluster.</title>
        <authorList>
            <person name="Oulmouden A."/>
            <person name="Wierinckx A."/>
            <person name="Petit J.-M."/>
            <person name="Costache M."/>
            <person name="Palcic M.M."/>
            <person name="Mollicone R."/>
            <person name="Oriol R."/>
            <person name="Julien R."/>
        </authorList>
    </citation>
    <scope>NUCLEOTIDE SEQUENCE [GENOMIC DNA]</scope>
</reference>
<reference key="2">
    <citation type="journal article" date="1999" name="Mol. Biol. Evol.">
        <title>Complete genomic organization of futb encoding a bovine alpha 3-fucosyltransferase: exons in human orthologous genes emerged from ancestral intronic sequences.</title>
        <authorList>
            <person name="Wierinckx A."/>
            <person name="Mercier D."/>
            <person name="Oulmouden A."/>
            <person name="Petit J.-M."/>
            <person name="Julien R."/>
        </authorList>
    </citation>
    <scope>NUCLEOTIDE SEQUENCE [GENOMIC DNA]</scope>
</reference>